<reference key="1">
    <citation type="journal article" date="2003" name="Nucleic Acids Res.">
        <title>The complete genome sequence and analysis of Corynebacterium diphtheriae NCTC13129.</title>
        <authorList>
            <person name="Cerdeno-Tarraga A.-M."/>
            <person name="Efstratiou A."/>
            <person name="Dover L.G."/>
            <person name="Holden M.T.G."/>
            <person name="Pallen M.J."/>
            <person name="Bentley S.D."/>
            <person name="Besra G.S."/>
            <person name="Churcher C.M."/>
            <person name="James K.D."/>
            <person name="De Zoysa A."/>
            <person name="Chillingworth T."/>
            <person name="Cronin A."/>
            <person name="Dowd L."/>
            <person name="Feltwell T."/>
            <person name="Hamlin N."/>
            <person name="Holroyd S."/>
            <person name="Jagels K."/>
            <person name="Moule S."/>
            <person name="Quail M.A."/>
            <person name="Rabbinowitsch E."/>
            <person name="Rutherford K.M."/>
            <person name="Thomson N.R."/>
            <person name="Unwin L."/>
            <person name="Whitehead S."/>
            <person name="Barrell B.G."/>
            <person name="Parkhill J."/>
        </authorList>
    </citation>
    <scope>NUCLEOTIDE SEQUENCE [LARGE SCALE GENOMIC DNA]</scope>
    <source>
        <strain>ATCC 700971 / NCTC 13129 / Biotype gravis</strain>
    </source>
</reference>
<gene>
    <name evidence="1" type="primary">cobS</name>
    <name type="ordered locus">DIP1635</name>
</gene>
<keyword id="KW-1003">Cell membrane</keyword>
<keyword id="KW-0169">Cobalamin biosynthesis</keyword>
<keyword id="KW-0460">Magnesium</keyword>
<keyword id="KW-0472">Membrane</keyword>
<keyword id="KW-1185">Reference proteome</keyword>
<keyword id="KW-0808">Transferase</keyword>
<keyword id="KW-0812">Transmembrane</keyword>
<keyword id="KW-1133">Transmembrane helix</keyword>
<sequence>MSGKAYFVNGEHGPAIIEGPLTALNWLTILPVPSATAFDRVTGGRVMASVPFIGIVLGIVGGAIAFAATSLGVASIVAATVIVCFWELFTRFMHLDGLADVSDALGSYAPPARAREIIADPATGLIGMGACLISILIHISSFTALLDAHLWWMVMITPMIGRFCAIFGAHSRLKPMNPTGFGAMLIGTVKTHTIIAWLCVLLVICIGVPLAMDRGELITITILGLLCSVTLALVEIRHLHRRFEGMNGDTTGFIMHSATALCALVFAVGVGIVA</sequence>
<evidence type="ECO:0000255" key="1">
    <source>
        <dbReference type="HAMAP-Rule" id="MF_00719"/>
    </source>
</evidence>
<organism>
    <name type="scientific">Corynebacterium diphtheriae (strain ATCC 700971 / NCTC 13129 / Biotype gravis)</name>
    <dbReference type="NCBI Taxonomy" id="257309"/>
    <lineage>
        <taxon>Bacteria</taxon>
        <taxon>Bacillati</taxon>
        <taxon>Actinomycetota</taxon>
        <taxon>Actinomycetes</taxon>
        <taxon>Mycobacteriales</taxon>
        <taxon>Corynebacteriaceae</taxon>
        <taxon>Corynebacterium</taxon>
    </lineage>
</organism>
<feature type="chain" id="PRO_1000132571" description="Adenosylcobinamide-GDP ribazoletransferase">
    <location>
        <begin position="1"/>
        <end position="274"/>
    </location>
</feature>
<feature type="transmembrane region" description="Helical" evidence="1">
    <location>
        <begin position="46"/>
        <end position="66"/>
    </location>
</feature>
<feature type="transmembrane region" description="Helical" evidence="1">
    <location>
        <begin position="69"/>
        <end position="89"/>
    </location>
</feature>
<feature type="transmembrane region" description="Helical" evidence="1">
    <location>
        <begin position="117"/>
        <end position="137"/>
    </location>
</feature>
<feature type="transmembrane region" description="Helical" evidence="1">
    <location>
        <begin position="151"/>
        <end position="173"/>
    </location>
</feature>
<feature type="transmembrane region" description="Helical" evidence="1">
    <location>
        <begin position="192"/>
        <end position="212"/>
    </location>
</feature>
<feature type="transmembrane region" description="Helical" evidence="1">
    <location>
        <begin position="216"/>
        <end position="236"/>
    </location>
</feature>
<feature type="transmembrane region" description="Helical" evidence="1">
    <location>
        <begin position="253"/>
        <end position="273"/>
    </location>
</feature>
<dbReference type="EC" id="2.7.8.26" evidence="1"/>
<dbReference type="EMBL" id="BX248358">
    <property type="protein sequence ID" value="CAE50160.1"/>
    <property type="molecule type" value="Genomic_DNA"/>
</dbReference>
<dbReference type="RefSeq" id="WP_003852228.1">
    <property type="nucleotide sequence ID" value="NC_002935.2"/>
</dbReference>
<dbReference type="STRING" id="257309.DIP1635"/>
<dbReference type="KEGG" id="cdi:DIP1635"/>
<dbReference type="HOGENOM" id="CLU_057426_0_0_11"/>
<dbReference type="UniPathway" id="UPA00148">
    <property type="reaction ID" value="UER00238"/>
</dbReference>
<dbReference type="Proteomes" id="UP000002198">
    <property type="component" value="Chromosome"/>
</dbReference>
<dbReference type="GO" id="GO:0005886">
    <property type="term" value="C:plasma membrane"/>
    <property type="evidence" value="ECO:0007669"/>
    <property type="project" value="UniProtKB-SubCell"/>
</dbReference>
<dbReference type="GO" id="GO:0051073">
    <property type="term" value="F:adenosylcobinamide-GDP ribazoletransferase activity"/>
    <property type="evidence" value="ECO:0007669"/>
    <property type="project" value="UniProtKB-UniRule"/>
</dbReference>
<dbReference type="GO" id="GO:0008818">
    <property type="term" value="F:cobalamin 5'-phosphate synthase activity"/>
    <property type="evidence" value="ECO:0007669"/>
    <property type="project" value="UniProtKB-UniRule"/>
</dbReference>
<dbReference type="GO" id="GO:0009236">
    <property type="term" value="P:cobalamin biosynthetic process"/>
    <property type="evidence" value="ECO:0007669"/>
    <property type="project" value="UniProtKB-UniRule"/>
</dbReference>
<dbReference type="HAMAP" id="MF_00719">
    <property type="entry name" value="CobS"/>
    <property type="match status" value="1"/>
</dbReference>
<dbReference type="InterPro" id="IPR003805">
    <property type="entry name" value="CobS"/>
</dbReference>
<dbReference type="NCBIfam" id="NF001282">
    <property type="entry name" value="PRK00235.2-4"/>
    <property type="match status" value="1"/>
</dbReference>
<dbReference type="PANTHER" id="PTHR34148">
    <property type="entry name" value="ADENOSYLCOBINAMIDE-GDP RIBAZOLETRANSFERASE"/>
    <property type="match status" value="1"/>
</dbReference>
<dbReference type="PANTHER" id="PTHR34148:SF1">
    <property type="entry name" value="ADENOSYLCOBINAMIDE-GDP RIBAZOLETRANSFERASE"/>
    <property type="match status" value="1"/>
</dbReference>
<dbReference type="Pfam" id="PF02654">
    <property type="entry name" value="CobS"/>
    <property type="match status" value="1"/>
</dbReference>
<name>COBS_CORDI</name>
<protein>
    <recommendedName>
        <fullName evidence="1">Adenosylcobinamide-GDP ribazoletransferase</fullName>
        <ecNumber evidence="1">2.7.8.26</ecNumber>
    </recommendedName>
    <alternativeName>
        <fullName evidence="1">Cobalamin synthase</fullName>
    </alternativeName>
    <alternativeName>
        <fullName evidence="1">Cobalamin-5'-phosphate synthase</fullName>
    </alternativeName>
</protein>
<accession>Q6NG92</accession>
<comment type="function">
    <text evidence="1">Joins adenosylcobinamide-GDP and alpha-ribazole to generate adenosylcobalamin (Ado-cobalamin). Also synthesizes adenosylcobalamin 5'-phosphate from adenosylcobinamide-GDP and alpha-ribazole 5'-phosphate.</text>
</comment>
<comment type="catalytic activity">
    <reaction evidence="1">
        <text>alpha-ribazole + adenosylcob(III)inamide-GDP = adenosylcob(III)alamin + GMP + H(+)</text>
        <dbReference type="Rhea" id="RHEA:16049"/>
        <dbReference type="ChEBI" id="CHEBI:10329"/>
        <dbReference type="ChEBI" id="CHEBI:15378"/>
        <dbReference type="ChEBI" id="CHEBI:18408"/>
        <dbReference type="ChEBI" id="CHEBI:58115"/>
        <dbReference type="ChEBI" id="CHEBI:60487"/>
        <dbReference type="EC" id="2.7.8.26"/>
    </reaction>
</comment>
<comment type="catalytic activity">
    <reaction evidence="1">
        <text>alpha-ribazole 5'-phosphate + adenosylcob(III)inamide-GDP = adenosylcob(III)alamin 5'-phosphate + GMP + H(+)</text>
        <dbReference type="Rhea" id="RHEA:23560"/>
        <dbReference type="ChEBI" id="CHEBI:15378"/>
        <dbReference type="ChEBI" id="CHEBI:57918"/>
        <dbReference type="ChEBI" id="CHEBI:58115"/>
        <dbReference type="ChEBI" id="CHEBI:60487"/>
        <dbReference type="ChEBI" id="CHEBI:60493"/>
        <dbReference type="EC" id="2.7.8.26"/>
    </reaction>
</comment>
<comment type="cofactor">
    <cofactor evidence="1">
        <name>Mg(2+)</name>
        <dbReference type="ChEBI" id="CHEBI:18420"/>
    </cofactor>
</comment>
<comment type="pathway">
    <text evidence="1">Cofactor biosynthesis; adenosylcobalamin biosynthesis; adenosylcobalamin from cob(II)yrinate a,c-diamide: step 7/7.</text>
</comment>
<comment type="subcellular location">
    <subcellularLocation>
        <location evidence="1">Cell membrane</location>
        <topology evidence="1">Multi-pass membrane protein</topology>
    </subcellularLocation>
</comment>
<comment type="similarity">
    <text evidence="1">Belongs to the CobS family.</text>
</comment>
<proteinExistence type="inferred from homology"/>